<feature type="chain" id="PRO_0000313422" description="DNA ligase">
    <location>
        <begin position="1"/>
        <end position="681"/>
    </location>
</feature>
<feature type="domain" description="BRCT" evidence="1">
    <location>
        <begin position="603"/>
        <end position="681"/>
    </location>
</feature>
<feature type="active site" description="N6-AMP-lysine intermediate" evidence="1">
    <location>
        <position position="122"/>
    </location>
</feature>
<feature type="binding site" evidence="1">
    <location>
        <begin position="42"/>
        <end position="46"/>
    </location>
    <ligand>
        <name>NAD(+)</name>
        <dbReference type="ChEBI" id="CHEBI:57540"/>
    </ligand>
</feature>
<feature type="binding site" evidence="1">
    <location>
        <begin position="91"/>
        <end position="92"/>
    </location>
    <ligand>
        <name>NAD(+)</name>
        <dbReference type="ChEBI" id="CHEBI:57540"/>
    </ligand>
</feature>
<feature type="binding site" evidence="1">
    <location>
        <position position="120"/>
    </location>
    <ligand>
        <name>NAD(+)</name>
        <dbReference type="ChEBI" id="CHEBI:57540"/>
    </ligand>
</feature>
<feature type="binding site" evidence="1">
    <location>
        <position position="143"/>
    </location>
    <ligand>
        <name>NAD(+)</name>
        <dbReference type="ChEBI" id="CHEBI:57540"/>
    </ligand>
</feature>
<feature type="binding site" evidence="1">
    <location>
        <position position="180"/>
    </location>
    <ligand>
        <name>NAD(+)</name>
        <dbReference type="ChEBI" id="CHEBI:57540"/>
    </ligand>
</feature>
<feature type="binding site" evidence="1">
    <location>
        <position position="302"/>
    </location>
    <ligand>
        <name>NAD(+)</name>
        <dbReference type="ChEBI" id="CHEBI:57540"/>
    </ligand>
</feature>
<feature type="binding site" evidence="1">
    <location>
        <position position="326"/>
    </location>
    <ligand>
        <name>NAD(+)</name>
        <dbReference type="ChEBI" id="CHEBI:57540"/>
    </ligand>
</feature>
<feature type="binding site" evidence="1">
    <location>
        <position position="420"/>
    </location>
    <ligand>
        <name>Zn(2+)</name>
        <dbReference type="ChEBI" id="CHEBI:29105"/>
    </ligand>
</feature>
<feature type="binding site" evidence="1">
    <location>
        <position position="423"/>
    </location>
    <ligand>
        <name>Zn(2+)</name>
        <dbReference type="ChEBI" id="CHEBI:29105"/>
    </ligand>
</feature>
<feature type="binding site" evidence="1">
    <location>
        <position position="438"/>
    </location>
    <ligand>
        <name>Zn(2+)</name>
        <dbReference type="ChEBI" id="CHEBI:29105"/>
    </ligand>
</feature>
<feature type="binding site" evidence="1">
    <location>
        <position position="444"/>
    </location>
    <ligand>
        <name>Zn(2+)</name>
        <dbReference type="ChEBI" id="CHEBI:29105"/>
    </ligand>
</feature>
<protein>
    <recommendedName>
        <fullName evidence="1">DNA ligase</fullName>
        <ecNumber evidence="1">6.5.1.2</ecNumber>
    </recommendedName>
    <alternativeName>
        <fullName evidence="1">Polydeoxyribonucleotide synthase [NAD(+)]</fullName>
    </alternativeName>
</protein>
<organism>
    <name type="scientific">Shewanella amazonensis (strain ATCC BAA-1098 / SB2B)</name>
    <dbReference type="NCBI Taxonomy" id="326297"/>
    <lineage>
        <taxon>Bacteria</taxon>
        <taxon>Pseudomonadati</taxon>
        <taxon>Pseudomonadota</taxon>
        <taxon>Gammaproteobacteria</taxon>
        <taxon>Alteromonadales</taxon>
        <taxon>Shewanellaceae</taxon>
        <taxon>Shewanella</taxon>
    </lineage>
</organism>
<evidence type="ECO:0000255" key="1">
    <source>
        <dbReference type="HAMAP-Rule" id="MF_01588"/>
    </source>
</evidence>
<accession>A1S5R7</accession>
<dbReference type="EC" id="6.5.1.2" evidence="1"/>
<dbReference type="EMBL" id="CP000507">
    <property type="protein sequence ID" value="ABL99723.1"/>
    <property type="molecule type" value="Genomic_DNA"/>
</dbReference>
<dbReference type="SMR" id="A1S5R7"/>
<dbReference type="STRING" id="326297.Sama_1516"/>
<dbReference type="KEGG" id="saz:Sama_1516"/>
<dbReference type="eggNOG" id="COG0272">
    <property type="taxonomic scope" value="Bacteria"/>
</dbReference>
<dbReference type="HOGENOM" id="CLU_007764_2_1_6"/>
<dbReference type="OrthoDB" id="9759736at2"/>
<dbReference type="Proteomes" id="UP000009175">
    <property type="component" value="Chromosome"/>
</dbReference>
<dbReference type="GO" id="GO:0005829">
    <property type="term" value="C:cytosol"/>
    <property type="evidence" value="ECO:0007669"/>
    <property type="project" value="TreeGrafter"/>
</dbReference>
<dbReference type="GO" id="GO:0003677">
    <property type="term" value="F:DNA binding"/>
    <property type="evidence" value="ECO:0007669"/>
    <property type="project" value="InterPro"/>
</dbReference>
<dbReference type="GO" id="GO:0003911">
    <property type="term" value="F:DNA ligase (NAD+) activity"/>
    <property type="evidence" value="ECO:0007669"/>
    <property type="project" value="UniProtKB-UniRule"/>
</dbReference>
<dbReference type="GO" id="GO:0046872">
    <property type="term" value="F:metal ion binding"/>
    <property type="evidence" value="ECO:0007669"/>
    <property type="project" value="UniProtKB-KW"/>
</dbReference>
<dbReference type="GO" id="GO:0006281">
    <property type="term" value="P:DNA repair"/>
    <property type="evidence" value="ECO:0007669"/>
    <property type="project" value="UniProtKB-KW"/>
</dbReference>
<dbReference type="GO" id="GO:0006260">
    <property type="term" value="P:DNA replication"/>
    <property type="evidence" value="ECO:0007669"/>
    <property type="project" value="UniProtKB-KW"/>
</dbReference>
<dbReference type="CDD" id="cd17748">
    <property type="entry name" value="BRCT_DNA_ligase_like"/>
    <property type="match status" value="1"/>
</dbReference>
<dbReference type="CDD" id="cd00114">
    <property type="entry name" value="LIGANc"/>
    <property type="match status" value="1"/>
</dbReference>
<dbReference type="FunFam" id="1.10.150.20:FF:000006">
    <property type="entry name" value="DNA ligase"/>
    <property type="match status" value="1"/>
</dbReference>
<dbReference type="FunFam" id="1.10.150.20:FF:000007">
    <property type="entry name" value="DNA ligase"/>
    <property type="match status" value="1"/>
</dbReference>
<dbReference type="FunFam" id="1.10.287.610:FF:000002">
    <property type="entry name" value="DNA ligase"/>
    <property type="match status" value="1"/>
</dbReference>
<dbReference type="FunFam" id="2.40.50.140:FF:000012">
    <property type="entry name" value="DNA ligase"/>
    <property type="match status" value="1"/>
</dbReference>
<dbReference type="FunFam" id="3.30.470.30:FF:000001">
    <property type="entry name" value="DNA ligase"/>
    <property type="match status" value="1"/>
</dbReference>
<dbReference type="FunFam" id="6.20.10.30:FF:000001">
    <property type="entry name" value="DNA ligase"/>
    <property type="match status" value="1"/>
</dbReference>
<dbReference type="Gene3D" id="6.20.10.30">
    <property type="match status" value="1"/>
</dbReference>
<dbReference type="Gene3D" id="1.10.150.20">
    <property type="entry name" value="5' to 3' exonuclease, C-terminal subdomain"/>
    <property type="match status" value="2"/>
</dbReference>
<dbReference type="Gene3D" id="3.40.50.10190">
    <property type="entry name" value="BRCT domain"/>
    <property type="match status" value="1"/>
</dbReference>
<dbReference type="Gene3D" id="3.30.470.30">
    <property type="entry name" value="DNA ligase/mRNA capping enzyme"/>
    <property type="match status" value="1"/>
</dbReference>
<dbReference type="Gene3D" id="1.10.287.610">
    <property type="entry name" value="Helix hairpin bin"/>
    <property type="match status" value="1"/>
</dbReference>
<dbReference type="Gene3D" id="2.40.50.140">
    <property type="entry name" value="Nucleic acid-binding proteins"/>
    <property type="match status" value="1"/>
</dbReference>
<dbReference type="HAMAP" id="MF_01588">
    <property type="entry name" value="DNA_ligase_A"/>
    <property type="match status" value="1"/>
</dbReference>
<dbReference type="InterPro" id="IPR001357">
    <property type="entry name" value="BRCT_dom"/>
</dbReference>
<dbReference type="InterPro" id="IPR036420">
    <property type="entry name" value="BRCT_dom_sf"/>
</dbReference>
<dbReference type="InterPro" id="IPR041663">
    <property type="entry name" value="DisA/LigA_HHH"/>
</dbReference>
<dbReference type="InterPro" id="IPR001679">
    <property type="entry name" value="DNA_ligase"/>
</dbReference>
<dbReference type="InterPro" id="IPR018239">
    <property type="entry name" value="DNA_ligase_AS"/>
</dbReference>
<dbReference type="InterPro" id="IPR033136">
    <property type="entry name" value="DNA_ligase_CS"/>
</dbReference>
<dbReference type="InterPro" id="IPR013839">
    <property type="entry name" value="DNAligase_adenylation"/>
</dbReference>
<dbReference type="InterPro" id="IPR013840">
    <property type="entry name" value="DNAligase_N"/>
</dbReference>
<dbReference type="InterPro" id="IPR003583">
    <property type="entry name" value="Hlx-hairpin-Hlx_DNA-bd_motif"/>
</dbReference>
<dbReference type="InterPro" id="IPR012340">
    <property type="entry name" value="NA-bd_OB-fold"/>
</dbReference>
<dbReference type="InterPro" id="IPR004150">
    <property type="entry name" value="NAD_DNA_ligase_OB"/>
</dbReference>
<dbReference type="InterPro" id="IPR010994">
    <property type="entry name" value="RuvA_2-like"/>
</dbReference>
<dbReference type="InterPro" id="IPR004149">
    <property type="entry name" value="Znf_DNAligase_C4"/>
</dbReference>
<dbReference type="NCBIfam" id="TIGR00575">
    <property type="entry name" value="dnlj"/>
    <property type="match status" value="1"/>
</dbReference>
<dbReference type="NCBIfam" id="NF005932">
    <property type="entry name" value="PRK07956.1"/>
    <property type="match status" value="1"/>
</dbReference>
<dbReference type="PANTHER" id="PTHR23389">
    <property type="entry name" value="CHROMOSOME TRANSMISSION FIDELITY FACTOR 18"/>
    <property type="match status" value="1"/>
</dbReference>
<dbReference type="PANTHER" id="PTHR23389:SF9">
    <property type="entry name" value="DNA LIGASE"/>
    <property type="match status" value="1"/>
</dbReference>
<dbReference type="Pfam" id="PF00533">
    <property type="entry name" value="BRCT"/>
    <property type="match status" value="1"/>
</dbReference>
<dbReference type="Pfam" id="PF01653">
    <property type="entry name" value="DNA_ligase_aden"/>
    <property type="match status" value="1"/>
</dbReference>
<dbReference type="Pfam" id="PF03120">
    <property type="entry name" value="DNA_ligase_OB"/>
    <property type="match status" value="1"/>
</dbReference>
<dbReference type="Pfam" id="PF03119">
    <property type="entry name" value="DNA_ligase_ZBD"/>
    <property type="match status" value="1"/>
</dbReference>
<dbReference type="Pfam" id="PF12826">
    <property type="entry name" value="HHH_2"/>
    <property type="match status" value="1"/>
</dbReference>
<dbReference type="Pfam" id="PF14520">
    <property type="entry name" value="HHH_5"/>
    <property type="match status" value="1"/>
</dbReference>
<dbReference type="Pfam" id="PF22745">
    <property type="entry name" value="Nlig-Ia"/>
    <property type="match status" value="1"/>
</dbReference>
<dbReference type="PIRSF" id="PIRSF001604">
    <property type="entry name" value="LigA"/>
    <property type="match status" value="1"/>
</dbReference>
<dbReference type="SMART" id="SM00292">
    <property type="entry name" value="BRCT"/>
    <property type="match status" value="1"/>
</dbReference>
<dbReference type="SMART" id="SM00278">
    <property type="entry name" value="HhH1"/>
    <property type="match status" value="4"/>
</dbReference>
<dbReference type="SMART" id="SM00532">
    <property type="entry name" value="LIGANc"/>
    <property type="match status" value="1"/>
</dbReference>
<dbReference type="SUPFAM" id="SSF52113">
    <property type="entry name" value="BRCT domain"/>
    <property type="match status" value="1"/>
</dbReference>
<dbReference type="SUPFAM" id="SSF56091">
    <property type="entry name" value="DNA ligase/mRNA capping enzyme, catalytic domain"/>
    <property type="match status" value="1"/>
</dbReference>
<dbReference type="SUPFAM" id="SSF50249">
    <property type="entry name" value="Nucleic acid-binding proteins"/>
    <property type="match status" value="1"/>
</dbReference>
<dbReference type="SUPFAM" id="SSF47781">
    <property type="entry name" value="RuvA domain 2-like"/>
    <property type="match status" value="1"/>
</dbReference>
<dbReference type="PROSITE" id="PS50172">
    <property type="entry name" value="BRCT"/>
    <property type="match status" value="1"/>
</dbReference>
<dbReference type="PROSITE" id="PS01055">
    <property type="entry name" value="DNA_LIGASE_N1"/>
    <property type="match status" value="1"/>
</dbReference>
<dbReference type="PROSITE" id="PS01056">
    <property type="entry name" value="DNA_LIGASE_N2"/>
    <property type="match status" value="1"/>
</dbReference>
<gene>
    <name evidence="1" type="primary">ligA</name>
    <name type="ordered locus">Sama_1516</name>
</gene>
<reference key="1">
    <citation type="submission" date="2006-12" db="EMBL/GenBank/DDBJ databases">
        <title>Complete sequence of Shewanella amazonensis SB2B.</title>
        <authorList>
            <consortium name="US DOE Joint Genome Institute"/>
            <person name="Copeland A."/>
            <person name="Lucas S."/>
            <person name="Lapidus A."/>
            <person name="Barry K."/>
            <person name="Detter J.C."/>
            <person name="Glavina del Rio T."/>
            <person name="Hammon N."/>
            <person name="Israni S."/>
            <person name="Dalin E."/>
            <person name="Tice H."/>
            <person name="Pitluck S."/>
            <person name="Munk A.C."/>
            <person name="Brettin T."/>
            <person name="Bruce D."/>
            <person name="Han C."/>
            <person name="Tapia R."/>
            <person name="Gilna P."/>
            <person name="Schmutz J."/>
            <person name="Larimer F."/>
            <person name="Land M."/>
            <person name="Hauser L."/>
            <person name="Kyrpides N."/>
            <person name="Mikhailova N."/>
            <person name="Fredrickson J."/>
            <person name="Richardson P."/>
        </authorList>
    </citation>
    <scope>NUCLEOTIDE SEQUENCE [LARGE SCALE GENOMIC DNA]</scope>
    <source>
        <strain>ATCC BAA-1098 / SB2B</strain>
    </source>
</reference>
<comment type="function">
    <text evidence="1">DNA ligase that catalyzes the formation of phosphodiester linkages between 5'-phosphoryl and 3'-hydroxyl groups in double-stranded DNA using NAD as a coenzyme and as the energy source for the reaction. It is essential for DNA replication and repair of damaged DNA.</text>
</comment>
<comment type="catalytic activity">
    <reaction evidence="1">
        <text>NAD(+) + (deoxyribonucleotide)n-3'-hydroxyl + 5'-phospho-(deoxyribonucleotide)m = (deoxyribonucleotide)n+m + AMP + beta-nicotinamide D-nucleotide.</text>
        <dbReference type="EC" id="6.5.1.2"/>
    </reaction>
</comment>
<comment type="cofactor">
    <cofactor evidence="1">
        <name>Mg(2+)</name>
        <dbReference type="ChEBI" id="CHEBI:18420"/>
    </cofactor>
    <cofactor evidence="1">
        <name>Mn(2+)</name>
        <dbReference type="ChEBI" id="CHEBI:29035"/>
    </cofactor>
</comment>
<comment type="similarity">
    <text evidence="1">Belongs to the NAD-dependent DNA ligase family. LigA subfamily.</text>
</comment>
<sequence length="681" mass="73671">MSGPAHFQGTIMQVKAEIQRLTAEINRHNIAYYVQDAPSIPDAEYDRLMNQLKALEAEYPQFAEPDSPTQRVGGAALNKFEQVSHLKPMLSLDNAFNEEDFVAFDKRLTDKVGSQVYCAEPKLDGLAVSLIYRNGVLERAATRGDGAVGEDISVNMRTIKSVPLRLQGDDIPALVEVRGEVFMPRAAFEALNDRARAKGDKLFVNPRNAAAGSLRQLDSKITAERSLAFYAYALGVVQDDNGADLVLAPTHKGQLERLTAFGLPVSKEVKLCEGLAEVMAYYADILKRRDELAFEIDGVVIKVNDIEAQQQLGFVARAPRWAIAFKFPAQEEMTVLEGVDFQVGRTGAVTPVARLKPVFVGGVTVSNATLHNGDEIARLGVKIGDTVIIRRAGDVIPQIVAVVPERRPDEAQDILFPDNCPVCGSLVERIEGEAVARCSGGLFCEAQRREAIKHFASRKAMYIDGMGDKVVEQLIDKELVESPADLFKLNVSKLTMLERMGTKSATNLVAAIEEAKTTTLPKFLYALGIREVGEATAANLAKHFRSLEAIRDADVDALIQVEDVGTVVAQHVAHFFAQPHNLEVIDALIAAGVNWPAIEKPSADAQPLLGQTWVLTGTLTSLGRTEAKAKLEALGAKVAGSVSKNTHCVVAGEAAGSKLAKAQELGIPVLDEAGLIELIGL</sequence>
<name>DNLJ_SHEAM</name>
<keyword id="KW-0227">DNA damage</keyword>
<keyword id="KW-0234">DNA repair</keyword>
<keyword id="KW-0235">DNA replication</keyword>
<keyword id="KW-0436">Ligase</keyword>
<keyword id="KW-0460">Magnesium</keyword>
<keyword id="KW-0464">Manganese</keyword>
<keyword id="KW-0479">Metal-binding</keyword>
<keyword id="KW-0520">NAD</keyword>
<keyword id="KW-1185">Reference proteome</keyword>
<keyword id="KW-0862">Zinc</keyword>
<proteinExistence type="inferred from homology"/>